<accession>B2VCW8</accession>
<gene>
    <name evidence="1" type="primary">purA</name>
    <name type="ordered locus">ETA_29620</name>
</gene>
<evidence type="ECO:0000255" key="1">
    <source>
        <dbReference type="HAMAP-Rule" id="MF_00011"/>
    </source>
</evidence>
<name>PURA_ERWT9</name>
<comment type="function">
    <text evidence="1">Plays an important role in the de novo pathway of purine nucleotide biosynthesis. Catalyzes the first committed step in the biosynthesis of AMP from IMP.</text>
</comment>
<comment type="catalytic activity">
    <reaction evidence="1">
        <text>IMP + L-aspartate + GTP = N(6)-(1,2-dicarboxyethyl)-AMP + GDP + phosphate + 2 H(+)</text>
        <dbReference type="Rhea" id="RHEA:15753"/>
        <dbReference type="ChEBI" id="CHEBI:15378"/>
        <dbReference type="ChEBI" id="CHEBI:29991"/>
        <dbReference type="ChEBI" id="CHEBI:37565"/>
        <dbReference type="ChEBI" id="CHEBI:43474"/>
        <dbReference type="ChEBI" id="CHEBI:57567"/>
        <dbReference type="ChEBI" id="CHEBI:58053"/>
        <dbReference type="ChEBI" id="CHEBI:58189"/>
        <dbReference type="EC" id="6.3.4.4"/>
    </reaction>
</comment>
<comment type="cofactor">
    <cofactor evidence="1">
        <name>Mg(2+)</name>
        <dbReference type="ChEBI" id="CHEBI:18420"/>
    </cofactor>
    <text evidence="1">Binds 1 Mg(2+) ion per subunit.</text>
</comment>
<comment type="pathway">
    <text evidence="1">Purine metabolism; AMP biosynthesis via de novo pathway; AMP from IMP: step 1/2.</text>
</comment>
<comment type="subunit">
    <text evidence="1">Homodimer.</text>
</comment>
<comment type="subcellular location">
    <subcellularLocation>
        <location evidence="1">Cytoplasm</location>
    </subcellularLocation>
</comment>
<comment type="similarity">
    <text evidence="1">Belongs to the adenylosuccinate synthetase family.</text>
</comment>
<proteinExistence type="inferred from homology"/>
<reference key="1">
    <citation type="journal article" date="2008" name="Environ. Microbiol.">
        <title>The genome of Erwinia tasmaniensis strain Et1/99, a non-pathogenic bacterium in the genus Erwinia.</title>
        <authorList>
            <person name="Kube M."/>
            <person name="Migdoll A.M."/>
            <person name="Mueller I."/>
            <person name="Kuhl H."/>
            <person name="Beck A."/>
            <person name="Reinhardt R."/>
            <person name="Geider K."/>
        </authorList>
    </citation>
    <scope>NUCLEOTIDE SEQUENCE [LARGE SCALE GENOMIC DNA]</scope>
    <source>
        <strain>DSM 17950 / CFBP 7177 / CIP 109463 / NCPPB 4357 / Et1/99</strain>
    </source>
</reference>
<dbReference type="EC" id="6.3.4.4" evidence="1"/>
<dbReference type="EMBL" id="CU468135">
    <property type="protein sequence ID" value="CAO98008.1"/>
    <property type="molecule type" value="Genomic_DNA"/>
</dbReference>
<dbReference type="RefSeq" id="WP_012442660.1">
    <property type="nucleotide sequence ID" value="NC_010694.1"/>
</dbReference>
<dbReference type="SMR" id="B2VCW8"/>
<dbReference type="STRING" id="465817.ETA_29620"/>
<dbReference type="KEGG" id="eta:ETA_29620"/>
<dbReference type="eggNOG" id="COG0104">
    <property type="taxonomic scope" value="Bacteria"/>
</dbReference>
<dbReference type="HOGENOM" id="CLU_029848_0_0_6"/>
<dbReference type="OrthoDB" id="9807553at2"/>
<dbReference type="UniPathway" id="UPA00075">
    <property type="reaction ID" value="UER00335"/>
</dbReference>
<dbReference type="Proteomes" id="UP000001726">
    <property type="component" value="Chromosome"/>
</dbReference>
<dbReference type="GO" id="GO:0005737">
    <property type="term" value="C:cytoplasm"/>
    <property type="evidence" value="ECO:0007669"/>
    <property type="project" value="UniProtKB-SubCell"/>
</dbReference>
<dbReference type="GO" id="GO:0004019">
    <property type="term" value="F:adenylosuccinate synthase activity"/>
    <property type="evidence" value="ECO:0007669"/>
    <property type="project" value="UniProtKB-UniRule"/>
</dbReference>
<dbReference type="GO" id="GO:0005525">
    <property type="term" value="F:GTP binding"/>
    <property type="evidence" value="ECO:0007669"/>
    <property type="project" value="UniProtKB-UniRule"/>
</dbReference>
<dbReference type="GO" id="GO:0000287">
    <property type="term" value="F:magnesium ion binding"/>
    <property type="evidence" value="ECO:0007669"/>
    <property type="project" value="UniProtKB-UniRule"/>
</dbReference>
<dbReference type="GO" id="GO:0044208">
    <property type="term" value="P:'de novo' AMP biosynthetic process"/>
    <property type="evidence" value="ECO:0007669"/>
    <property type="project" value="UniProtKB-UniRule"/>
</dbReference>
<dbReference type="GO" id="GO:0046040">
    <property type="term" value="P:IMP metabolic process"/>
    <property type="evidence" value="ECO:0007669"/>
    <property type="project" value="TreeGrafter"/>
</dbReference>
<dbReference type="CDD" id="cd03108">
    <property type="entry name" value="AdSS"/>
    <property type="match status" value="1"/>
</dbReference>
<dbReference type="FunFam" id="1.10.300.10:FF:000001">
    <property type="entry name" value="Adenylosuccinate synthetase"/>
    <property type="match status" value="1"/>
</dbReference>
<dbReference type="FunFam" id="3.90.170.10:FF:000001">
    <property type="entry name" value="Adenylosuccinate synthetase"/>
    <property type="match status" value="1"/>
</dbReference>
<dbReference type="Gene3D" id="3.40.440.10">
    <property type="entry name" value="Adenylosuccinate Synthetase, subunit A, domain 1"/>
    <property type="match status" value="1"/>
</dbReference>
<dbReference type="Gene3D" id="1.10.300.10">
    <property type="entry name" value="Adenylosuccinate Synthetase, subunit A, domain 2"/>
    <property type="match status" value="1"/>
</dbReference>
<dbReference type="Gene3D" id="3.90.170.10">
    <property type="entry name" value="Adenylosuccinate Synthetase, subunit A, domain 3"/>
    <property type="match status" value="1"/>
</dbReference>
<dbReference type="HAMAP" id="MF_00011">
    <property type="entry name" value="Adenylosucc_synth"/>
    <property type="match status" value="1"/>
</dbReference>
<dbReference type="InterPro" id="IPR018220">
    <property type="entry name" value="Adenylosuccin_syn_GTP-bd"/>
</dbReference>
<dbReference type="InterPro" id="IPR033128">
    <property type="entry name" value="Adenylosuccin_syn_Lys_AS"/>
</dbReference>
<dbReference type="InterPro" id="IPR042109">
    <property type="entry name" value="Adenylosuccinate_synth_dom1"/>
</dbReference>
<dbReference type="InterPro" id="IPR042110">
    <property type="entry name" value="Adenylosuccinate_synth_dom2"/>
</dbReference>
<dbReference type="InterPro" id="IPR042111">
    <property type="entry name" value="Adenylosuccinate_synth_dom3"/>
</dbReference>
<dbReference type="InterPro" id="IPR001114">
    <property type="entry name" value="Adenylosuccinate_synthetase"/>
</dbReference>
<dbReference type="InterPro" id="IPR027417">
    <property type="entry name" value="P-loop_NTPase"/>
</dbReference>
<dbReference type="NCBIfam" id="NF002223">
    <property type="entry name" value="PRK01117.1"/>
    <property type="match status" value="1"/>
</dbReference>
<dbReference type="NCBIfam" id="TIGR00184">
    <property type="entry name" value="purA"/>
    <property type="match status" value="1"/>
</dbReference>
<dbReference type="PANTHER" id="PTHR11846">
    <property type="entry name" value="ADENYLOSUCCINATE SYNTHETASE"/>
    <property type="match status" value="1"/>
</dbReference>
<dbReference type="PANTHER" id="PTHR11846:SF0">
    <property type="entry name" value="ADENYLOSUCCINATE SYNTHETASE"/>
    <property type="match status" value="1"/>
</dbReference>
<dbReference type="Pfam" id="PF00709">
    <property type="entry name" value="Adenylsucc_synt"/>
    <property type="match status" value="1"/>
</dbReference>
<dbReference type="SMART" id="SM00788">
    <property type="entry name" value="Adenylsucc_synt"/>
    <property type="match status" value="1"/>
</dbReference>
<dbReference type="SUPFAM" id="SSF52540">
    <property type="entry name" value="P-loop containing nucleoside triphosphate hydrolases"/>
    <property type="match status" value="1"/>
</dbReference>
<dbReference type="PROSITE" id="PS01266">
    <property type="entry name" value="ADENYLOSUCCIN_SYN_1"/>
    <property type="match status" value="1"/>
</dbReference>
<dbReference type="PROSITE" id="PS00513">
    <property type="entry name" value="ADENYLOSUCCIN_SYN_2"/>
    <property type="match status" value="1"/>
</dbReference>
<feature type="chain" id="PRO_1000089292" description="Adenylosuccinate synthetase">
    <location>
        <begin position="1"/>
        <end position="432"/>
    </location>
</feature>
<feature type="active site" description="Proton acceptor" evidence="1">
    <location>
        <position position="14"/>
    </location>
</feature>
<feature type="active site" description="Proton donor" evidence="1">
    <location>
        <position position="42"/>
    </location>
</feature>
<feature type="binding site" evidence="1">
    <location>
        <begin position="13"/>
        <end position="19"/>
    </location>
    <ligand>
        <name>GTP</name>
        <dbReference type="ChEBI" id="CHEBI:37565"/>
    </ligand>
</feature>
<feature type="binding site" description="in other chain" evidence="1">
    <location>
        <begin position="14"/>
        <end position="17"/>
    </location>
    <ligand>
        <name>IMP</name>
        <dbReference type="ChEBI" id="CHEBI:58053"/>
        <note>ligand shared between dimeric partners</note>
    </ligand>
</feature>
<feature type="binding site" evidence="1">
    <location>
        <position position="14"/>
    </location>
    <ligand>
        <name>Mg(2+)</name>
        <dbReference type="ChEBI" id="CHEBI:18420"/>
    </ligand>
</feature>
<feature type="binding site" description="in other chain" evidence="1">
    <location>
        <begin position="39"/>
        <end position="42"/>
    </location>
    <ligand>
        <name>IMP</name>
        <dbReference type="ChEBI" id="CHEBI:58053"/>
        <note>ligand shared between dimeric partners</note>
    </ligand>
</feature>
<feature type="binding site" evidence="1">
    <location>
        <begin position="41"/>
        <end position="43"/>
    </location>
    <ligand>
        <name>GTP</name>
        <dbReference type="ChEBI" id="CHEBI:37565"/>
    </ligand>
</feature>
<feature type="binding site" evidence="1">
    <location>
        <position position="41"/>
    </location>
    <ligand>
        <name>Mg(2+)</name>
        <dbReference type="ChEBI" id="CHEBI:18420"/>
    </ligand>
</feature>
<feature type="binding site" description="in other chain" evidence="1">
    <location>
        <position position="130"/>
    </location>
    <ligand>
        <name>IMP</name>
        <dbReference type="ChEBI" id="CHEBI:58053"/>
        <note>ligand shared between dimeric partners</note>
    </ligand>
</feature>
<feature type="binding site" evidence="1">
    <location>
        <position position="144"/>
    </location>
    <ligand>
        <name>IMP</name>
        <dbReference type="ChEBI" id="CHEBI:58053"/>
        <note>ligand shared between dimeric partners</note>
    </ligand>
</feature>
<feature type="binding site" description="in other chain" evidence="1">
    <location>
        <position position="225"/>
    </location>
    <ligand>
        <name>IMP</name>
        <dbReference type="ChEBI" id="CHEBI:58053"/>
        <note>ligand shared between dimeric partners</note>
    </ligand>
</feature>
<feature type="binding site" description="in other chain" evidence="1">
    <location>
        <position position="240"/>
    </location>
    <ligand>
        <name>IMP</name>
        <dbReference type="ChEBI" id="CHEBI:58053"/>
        <note>ligand shared between dimeric partners</note>
    </ligand>
</feature>
<feature type="binding site" evidence="1">
    <location>
        <begin position="300"/>
        <end position="306"/>
    </location>
    <ligand>
        <name>substrate</name>
    </ligand>
</feature>
<feature type="binding site" description="in other chain" evidence="1">
    <location>
        <position position="304"/>
    </location>
    <ligand>
        <name>IMP</name>
        <dbReference type="ChEBI" id="CHEBI:58053"/>
        <note>ligand shared between dimeric partners</note>
    </ligand>
</feature>
<feature type="binding site" evidence="1">
    <location>
        <position position="306"/>
    </location>
    <ligand>
        <name>GTP</name>
        <dbReference type="ChEBI" id="CHEBI:37565"/>
    </ligand>
</feature>
<feature type="binding site" evidence="1">
    <location>
        <begin position="332"/>
        <end position="334"/>
    </location>
    <ligand>
        <name>GTP</name>
        <dbReference type="ChEBI" id="CHEBI:37565"/>
    </ligand>
</feature>
<feature type="binding site" evidence="1">
    <location>
        <begin position="415"/>
        <end position="417"/>
    </location>
    <ligand>
        <name>GTP</name>
        <dbReference type="ChEBI" id="CHEBI:37565"/>
    </ligand>
</feature>
<sequence length="432" mass="46974">MGKNVVVLGTQWGDEGKGKIVDLLTERAKYVVRYQGGHNAGHTLVINGEKTVLHLIPSGILRENVTSIIGNGVVLSPAALMKEMKGLEDRGFPVRERLFISEACPLILEYHVALDVAREKARGAKAIGTTGRGIGPAYEDKVARRGLRVGDLFNKETFAAKLKEVMEYHNFQLVNYYKAEAVDYDKVLADVMAIADILTGMVVDVSELLDGARQRGDLIMFEGAQGTLLDIDHGTYPYVTSSNTTAGGVATGSGIGPRYVDYVLGIVKAYSTRVGAGPFPTELFDETGEFLCKQGNEFGATTGRRRRTGWLDAVAVRRAVQINSLSGFCMTKLDVLDGLKEVKLCVAYRMPDGSEVTTTPLAAEGWEGIEPIYETLPGWSETTFGVKTLDGLPQAARDYIKRVEEVTGVPVDIISTGPDRSETMILRDPFDA</sequence>
<protein>
    <recommendedName>
        <fullName evidence="1">Adenylosuccinate synthetase</fullName>
        <shortName evidence="1">AMPSase</shortName>
        <shortName evidence="1">AdSS</shortName>
        <ecNumber evidence="1">6.3.4.4</ecNumber>
    </recommendedName>
    <alternativeName>
        <fullName evidence="1">IMP--aspartate ligase</fullName>
    </alternativeName>
</protein>
<organism>
    <name type="scientific">Erwinia tasmaniensis (strain DSM 17950 / CFBP 7177 / CIP 109463 / NCPPB 4357 / Et1/99)</name>
    <dbReference type="NCBI Taxonomy" id="465817"/>
    <lineage>
        <taxon>Bacteria</taxon>
        <taxon>Pseudomonadati</taxon>
        <taxon>Pseudomonadota</taxon>
        <taxon>Gammaproteobacteria</taxon>
        <taxon>Enterobacterales</taxon>
        <taxon>Erwiniaceae</taxon>
        <taxon>Erwinia</taxon>
    </lineage>
</organism>
<keyword id="KW-0963">Cytoplasm</keyword>
<keyword id="KW-0342">GTP-binding</keyword>
<keyword id="KW-0436">Ligase</keyword>
<keyword id="KW-0460">Magnesium</keyword>
<keyword id="KW-0479">Metal-binding</keyword>
<keyword id="KW-0547">Nucleotide-binding</keyword>
<keyword id="KW-0658">Purine biosynthesis</keyword>
<keyword id="KW-1185">Reference proteome</keyword>